<accession>Q7Y8J9</accession>
<gene>
    <name type="primary">MT-ND4L</name>
    <name type="synonym">MTND4L</name>
    <name type="synonym">NADH4L</name>
    <name type="synonym">ND4L</name>
</gene>
<proteinExistence type="inferred from homology"/>
<organism>
    <name type="scientific">Procavia capensis</name>
    <name type="common">Rock hyrax</name>
    <dbReference type="NCBI Taxonomy" id="9813"/>
    <lineage>
        <taxon>Eukaryota</taxon>
        <taxon>Metazoa</taxon>
        <taxon>Chordata</taxon>
        <taxon>Craniata</taxon>
        <taxon>Vertebrata</taxon>
        <taxon>Euteleostomi</taxon>
        <taxon>Mammalia</taxon>
        <taxon>Eutheria</taxon>
        <taxon>Afrotheria</taxon>
        <taxon>Hyracoidea</taxon>
        <taxon>Procaviidae</taxon>
        <taxon>Procavia</taxon>
    </lineage>
</organism>
<sequence length="98" mass="10854">MHYIYINIIIAFSMSLLGALLYRSHIMSSLLCLEGMMLALFVLSTLIALNMQFTLATMMPIILLVFAACEAAIGLSLLVMVSNTYGLDYVQNLNLLQC</sequence>
<name>NU4LM_PROCA</name>
<evidence type="ECO:0000250" key="1">
    <source>
        <dbReference type="UniProtKB" id="P03901"/>
    </source>
</evidence>
<evidence type="ECO:0000250" key="2">
    <source>
        <dbReference type="UniProtKB" id="P03902"/>
    </source>
</evidence>
<evidence type="ECO:0000255" key="3"/>
<evidence type="ECO:0000305" key="4"/>
<feature type="chain" id="PRO_0000275109" description="NADH-ubiquinone oxidoreductase chain 4L">
    <location>
        <begin position="1"/>
        <end position="98"/>
    </location>
</feature>
<feature type="transmembrane region" description="Helical" evidence="3">
    <location>
        <begin position="1"/>
        <end position="21"/>
    </location>
</feature>
<feature type="transmembrane region" description="Helical" evidence="3">
    <location>
        <begin position="29"/>
        <end position="49"/>
    </location>
</feature>
<feature type="transmembrane region" description="Helical" evidence="3">
    <location>
        <begin position="61"/>
        <end position="81"/>
    </location>
</feature>
<keyword id="KW-0249">Electron transport</keyword>
<keyword id="KW-0472">Membrane</keyword>
<keyword id="KW-0496">Mitochondrion</keyword>
<keyword id="KW-0999">Mitochondrion inner membrane</keyword>
<keyword id="KW-0520">NAD</keyword>
<keyword id="KW-0679">Respiratory chain</keyword>
<keyword id="KW-1278">Translocase</keyword>
<keyword id="KW-0812">Transmembrane</keyword>
<keyword id="KW-1133">Transmembrane helix</keyword>
<keyword id="KW-0813">Transport</keyword>
<keyword id="KW-0830">Ubiquinone</keyword>
<geneLocation type="mitochondrion"/>
<protein>
    <recommendedName>
        <fullName>NADH-ubiquinone oxidoreductase chain 4L</fullName>
        <ecNumber>7.1.1.2</ecNumber>
    </recommendedName>
    <alternativeName>
        <fullName>NADH dehydrogenase subunit 4L</fullName>
    </alternativeName>
</protein>
<reference key="1">
    <citation type="journal article" date="2003" name="Mol. Phylogenet. Evol.">
        <title>Afrotherian phylogeny as inferred from complete mitochondrial genomes.</title>
        <authorList>
            <person name="Murata Y."/>
            <person name="Nikaido M."/>
            <person name="Sasaki T."/>
            <person name="Cao Y."/>
            <person name="Fukumoto Y."/>
            <person name="Hasegawa M."/>
            <person name="Okada N."/>
        </authorList>
    </citation>
    <scope>NUCLEOTIDE SEQUENCE [GENOMIC DNA]</scope>
</reference>
<comment type="function">
    <text evidence="1">Core subunit of the mitochondrial membrane respiratory chain NADH dehydrogenase (Complex I) which catalyzes electron transfer from NADH through the respiratory chain, using ubiquinone as an electron acceptor. Part of the enzyme membrane arm which is embedded in the lipid bilayer and involved in proton translocation.</text>
</comment>
<comment type="catalytic activity">
    <reaction evidence="1">
        <text>a ubiquinone + NADH + 5 H(+)(in) = a ubiquinol + NAD(+) + 4 H(+)(out)</text>
        <dbReference type="Rhea" id="RHEA:29091"/>
        <dbReference type="Rhea" id="RHEA-COMP:9565"/>
        <dbReference type="Rhea" id="RHEA-COMP:9566"/>
        <dbReference type="ChEBI" id="CHEBI:15378"/>
        <dbReference type="ChEBI" id="CHEBI:16389"/>
        <dbReference type="ChEBI" id="CHEBI:17976"/>
        <dbReference type="ChEBI" id="CHEBI:57540"/>
        <dbReference type="ChEBI" id="CHEBI:57945"/>
        <dbReference type="EC" id="7.1.1.2"/>
    </reaction>
    <physiologicalReaction direction="left-to-right" evidence="1">
        <dbReference type="Rhea" id="RHEA:29092"/>
    </physiologicalReaction>
</comment>
<comment type="subunit">
    <text evidence="2">Core subunit of respiratory chain NADH dehydrogenase (Complex I) which is composed of 45 different subunits.</text>
</comment>
<comment type="subcellular location">
    <subcellularLocation>
        <location evidence="2">Mitochondrion inner membrane</location>
        <topology evidence="3">Multi-pass membrane protein</topology>
    </subcellularLocation>
</comment>
<comment type="similarity">
    <text evidence="4">Belongs to the complex I subunit 4L family.</text>
</comment>
<dbReference type="EC" id="7.1.1.2"/>
<dbReference type="EMBL" id="AB096865">
    <property type="protein sequence ID" value="BAC78407.1"/>
    <property type="molecule type" value="Genomic_DNA"/>
</dbReference>
<dbReference type="RefSeq" id="NP_861484.1">
    <property type="nucleotide sequence ID" value="NC_004919.1"/>
</dbReference>
<dbReference type="SMR" id="Q7Y8J9"/>
<dbReference type="Ensembl" id="ENSPCAT00000020696">
    <property type="protein sequence ID" value="ENSPCAP00000016140"/>
    <property type="gene ID" value="ENSPCAG00000020702"/>
</dbReference>
<dbReference type="GeneID" id="1485708"/>
<dbReference type="CTD" id="4539"/>
<dbReference type="HOGENOM" id="CLU_182394_0_0_1"/>
<dbReference type="GO" id="GO:0005743">
    <property type="term" value="C:mitochondrial inner membrane"/>
    <property type="evidence" value="ECO:0000250"/>
    <property type="project" value="UniProtKB"/>
</dbReference>
<dbReference type="GO" id="GO:0045271">
    <property type="term" value="C:respiratory chain complex I"/>
    <property type="evidence" value="ECO:0000250"/>
    <property type="project" value="UniProtKB"/>
</dbReference>
<dbReference type="GO" id="GO:0008137">
    <property type="term" value="F:NADH dehydrogenase (ubiquinone) activity"/>
    <property type="evidence" value="ECO:0000250"/>
    <property type="project" value="UniProtKB"/>
</dbReference>
<dbReference type="GO" id="GO:0042773">
    <property type="term" value="P:ATP synthesis coupled electron transport"/>
    <property type="evidence" value="ECO:0007669"/>
    <property type="project" value="InterPro"/>
</dbReference>
<dbReference type="FunFam" id="1.10.287.3510:FF:000002">
    <property type="entry name" value="NADH-ubiquinone oxidoreductase chain 4L"/>
    <property type="match status" value="1"/>
</dbReference>
<dbReference type="Gene3D" id="1.10.287.3510">
    <property type="match status" value="1"/>
</dbReference>
<dbReference type="InterPro" id="IPR001133">
    <property type="entry name" value="NADH_UbQ_OxRdtase_chain4L/K"/>
</dbReference>
<dbReference type="InterPro" id="IPR039428">
    <property type="entry name" value="NUOK/Mnh_C1-like"/>
</dbReference>
<dbReference type="PANTHER" id="PTHR11434:SF0">
    <property type="entry name" value="NADH-UBIQUINONE OXIDOREDUCTASE CHAIN 4L"/>
    <property type="match status" value="1"/>
</dbReference>
<dbReference type="PANTHER" id="PTHR11434">
    <property type="entry name" value="NADH-UBIQUINONE OXIDOREDUCTASE SUBUNIT ND4L"/>
    <property type="match status" value="1"/>
</dbReference>
<dbReference type="Pfam" id="PF00420">
    <property type="entry name" value="Oxidored_q2"/>
    <property type="match status" value="1"/>
</dbReference>